<gene>
    <name type="primary">Dnajc22</name>
</gene>
<feature type="chain" id="PRO_0000325863" description="DnaJ homolog subfamily C member 22">
    <location>
        <begin position="1"/>
        <end position="339"/>
    </location>
</feature>
<feature type="transmembrane region" description="Helical" evidence="1">
    <location>
        <begin position="5"/>
        <end position="25"/>
    </location>
</feature>
<feature type="transmembrane region" description="Helical" evidence="1">
    <location>
        <begin position="30"/>
        <end position="50"/>
    </location>
</feature>
<feature type="transmembrane region" description="Helical" evidence="1">
    <location>
        <begin position="81"/>
        <end position="101"/>
    </location>
</feature>
<feature type="transmembrane region" description="Helical" evidence="1">
    <location>
        <begin position="105"/>
        <end position="125"/>
    </location>
</feature>
<feature type="transmembrane region" description="Helical" evidence="1">
    <location>
        <begin position="135"/>
        <end position="155"/>
    </location>
</feature>
<feature type="transmembrane region" description="Helical" evidence="1">
    <location>
        <begin position="185"/>
        <end position="205"/>
    </location>
</feature>
<feature type="transmembrane region" description="Helical" evidence="1">
    <location>
        <begin position="218"/>
        <end position="238"/>
    </location>
</feature>
<feature type="domain" description="TM2" evidence="1">
    <location>
        <begin position="4"/>
        <end position="50"/>
    </location>
</feature>
<feature type="domain" description="J" evidence="2">
    <location>
        <begin position="277"/>
        <end position="339"/>
    </location>
</feature>
<protein>
    <recommendedName>
        <fullName>DnaJ homolog subfamily C member 22</fullName>
    </recommendedName>
</protein>
<dbReference type="EMBL" id="BC039633">
    <property type="protein sequence ID" value="AAH39633.1"/>
    <property type="molecule type" value="mRNA"/>
</dbReference>
<dbReference type="CCDS" id="CCDS27815.1"/>
<dbReference type="RefSeq" id="NP_001405734.1">
    <property type="nucleotide sequence ID" value="NM_001418805.1"/>
</dbReference>
<dbReference type="RefSeq" id="NP_001405735.1">
    <property type="nucleotide sequence ID" value="NM_001418806.1"/>
</dbReference>
<dbReference type="RefSeq" id="NP_789805.1">
    <property type="nucleotide sequence ID" value="NM_176835.3"/>
</dbReference>
<dbReference type="RefSeq" id="XP_006521520.1">
    <property type="nucleotide sequence ID" value="XM_006521457.5"/>
</dbReference>
<dbReference type="RefSeq" id="XP_006521522.1">
    <property type="nucleotide sequence ID" value="XM_006521459.3"/>
</dbReference>
<dbReference type="RefSeq" id="XP_011244040.1">
    <property type="nucleotide sequence ID" value="XM_011245738.1"/>
</dbReference>
<dbReference type="SMR" id="Q8CHS2"/>
<dbReference type="FunCoup" id="Q8CHS2">
    <property type="interactions" value="314"/>
</dbReference>
<dbReference type="STRING" id="10090.ENSMUSP00000055482"/>
<dbReference type="PhosphoSitePlus" id="Q8CHS2"/>
<dbReference type="PaxDb" id="10090-ENSMUSP00000055482"/>
<dbReference type="ProteomicsDB" id="279670"/>
<dbReference type="Antibodypedia" id="25951">
    <property type="antibodies" value="81 antibodies from 14 providers"/>
</dbReference>
<dbReference type="Ensembl" id="ENSMUST00000061295.7">
    <property type="protein sequence ID" value="ENSMUSP00000055482.7"/>
    <property type="gene ID" value="ENSMUSG00000038009.8"/>
</dbReference>
<dbReference type="GeneID" id="72778"/>
<dbReference type="KEGG" id="mmu:72778"/>
<dbReference type="UCSC" id="uc007xou.1">
    <property type="organism name" value="mouse"/>
</dbReference>
<dbReference type="AGR" id="MGI:1920028"/>
<dbReference type="CTD" id="79962"/>
<dbReference type="MGI" id="MGI:1920028">
    <property type="gene designation" value="Dnajc22"/>
</dbReference>
<dbReference type="VEuPathDB" id="HostDB:ENSMUSG00000038009"/>
<dbReference type="eggNOG" id="KOG0714">
    <property type="taxonomic scope" value="Eukaryota"/>
</dbReference>
<dbReference type="GeneTree" id="ENSGT00390000012136"/>
<dbReference type="HOGENOM" id="CLU_057927_1_0_1"/>
<dbReference type="InParanoid" id="Q8CHS2"/>
<dbReference type="OMA" id="VWWHCLL"/>
<dbReference type="OrthoDB" id="10262359at2759"/>
<dbReference type="PhylomeDB" id="Q8CHS2"/>
<dbReference type="TreeFam" id="TF324581"/>
<dbReference type="BioGRID-ORCS" id="72778">
    <property type="hits" value="2 hits in 79 CRISPR screens"/>
</dbReference>
<dbReference type="PRO" id="PR:Q8CHS2"/>
<dbReference type="Proteomes" id="UP000000589">
    <property type="component" value="Chromosome 15"/>
</dbReference>
<dbReference type="RNAct" id="Q8CHS2">
    <property type="molecule type" value="protein"/>
</dbReference>
<dbReference type="Bgee" id="ENSMUSG00000038009">
    <property type="expression patterns" value="Expressed in left lobe of liver and 88 other cell types or tissues"/>
</dbReference>
<dbReference type="GO" id="GO:0016020">
    <property type="term" value="C:membrane"/>
    <property type="evidence" value="ECO:0007669"/>
    <property type="project" value="UniProtKB-SubCell"/>
</dbReference>
<dbReference type="CDD" id="cd06257">
    <property type="entry name" value="DnaJ"/>
    <property type="match status" value="1"/>
</dbReference>
<dbReference type="Gene3D" id="1.10.287.110">
    <property type="entry name" value="DnaJ domain"/>
    <property type="match status" value="1"/>
</dbReference>
<dbReference type="InterPro" id="IPR001623">
    <property type="entry name" value="DnaJ_domain"/>
</dbReference>
<dbReference type="InterPro" id="IPR036869">
    <property type="entry name" value="J_dom_sf"/>
</dbReference>
<dbReference type="InterPro" id="IPR007829">
    <property type="entry name" value="TM2"/>
</dbReference>
<dbReference type="PANTHER" id="PTHR44733">
    <property type="entry name" value="DNAJ HOMOLOG SUBFAMILY C MEMBER 22"/>
    <property type="match status" value="1"/>
</dbReference>
<dbReference type="PANTHER" id="PTHR44733:SF1">
    <property type="entry name" value="DNAJ HOMOLOG SUBFAMILY C MEMBER 22"/>
    <property type="match status" value="1"/>
</dbReference>
<dbReference type="Pfam" id="PF00226">
    <property type="entry name" value="DnaJ"/>
    <property type="match status" value="1"/>
</dbReference>
<dbReference type="Pfam" id="PF05154">
    <property type="entry name" value="TM2"/>
    <property type="match status" value="1"/>
</dbReference>
<dbReference type="PRINTS" id="PR00625">
    <property type="entry name" value="JDOMAIN"/>
</dbReference>
<dbReference type="SMART" id="SM00271">
    <property type="entry name" value="DnaJ"/>
    <property type="match status" value="1"/>
</dbReference>
<dbReference type="SUPFAM" id="SSF46565">
    <property type="entry name" value="Chaperone J-domain"/>
    <property type="match status" value="1"/>
</dbReference>
<dbReference type="PROSITE" id="PS50076">
    <property type="entry name" value="DNAJ_2"/>
    <property type="match status" value="1"/>
</dbReference>
<accession>Q8CHS2</accession>
<reference key="1">
    <citation type="journal article" date="2004" name="Genome Res.">
        <title>The status, quality, and expansion of the NIH full-length cDNA project: the Mammalian Gene Collection (MGC).</title>
        <authorList>
            <consortium name="The MGC Project Team"/>
        </authorList>
    </citation>
    <scope>NUCLEOTIDE SEQUENCE [LARGE SCALE MRNA]</scope>
    <source>
        <strain>FVB/N</strain>
        <tissue>Liver</tissue>
    </source>
</reference>
<reference key="2">
    <citation type="journal article" date="2010" name="Cell">
        <title>A tissue-specific atlas of mouse protein phosphorylation and expression.</title>
        <authorList>
            <person name="Huttlin E.L."/>
            <person name="Jedrychowski M.P."/>
            <person name="Elias J.E."/>
            <person name="Goswami T."/>
            <person name="Rad R."/>
            <person name="Beausoleil S.A."/>
            <person name="Villen J."/>
            <person name="Haas W."/>
            <person name="Sowa M.E."/>
            <person name="Gygi S.P."/>
        </authorList>
    </citation>
    <scope>IDENTIFICATION BY MASS SPECTROMETRY [LARGE SCALE ANALYSIS]</scope>
    <source>
        <tissue>Liver</tissue>
    </source>
</reference>
<sequence>MAKGLLMTYVLWALGGPVGLHHLYLGRDSHALLWMLTLGGGGLGWLWEFWKLPSFVAQANRVQSWKQRPEEERPPLSLLRFASQIVVGVYFGLVALVSLSSMDNFYIVGLPLAVGLGVLLVAAVGNQTSDFKNTLGAAFLTSPVFYGRPIAILPISLAASITAQKHRRYKASAGSETLSVRLYRVGLAYLAFTGPLAYSTMYNTAATINYVAETLGSFLSWFSFFPLLGRLVESVLLLPCRIWWLLVGGPGFNSSRFQEWEKLYEFVDSFQDEKLQLAHQVLGVPEGATNEEIHRSYRDLVKVWHPDHNRHQTEEAQRHFLEIQAAYEVLSQPKKPRAS</sequence>
<comment type="function">
    <text>May function as a co-chaperone.</text>
</comment>
<comment type="subcellular location">
    <subcellularLocation>
        <location evidence="3">Membrane</location>
        <topology evidence="3">Multi-pass membrane protein</topology>
    </subcellularLocation>
</comment>
<proteinExistence type="evidence at protein level"/>
<keyword id="KW-0143">Chaperone</keyword>
<keyword id="KW-0472">Membrane</keyword>
<keyword id="KW-1185">Reference proteome</keyword>
<keyword id="KW-0812">Transmembrane</keyword>
<keyword id="KW-1133">Transmembrane helix</keyword>
<name>DJC22_MOUSE</name>
<organism>
    <name type="scientific">Mus musculus</name>
    <name type="common">Mouse</name>
    <dbReference type="NCBI Taxonomy" id="10090"/>
    <lineage>
        <taxon>Eukaryota</taxon>
        <taxon>Metazoa</taxon>
        <taxon>Chordata</taxon>
        <taxon>Craniata</taxon>
        <taxon>Vertebrata</taxon>
        <taxon>Euteleostomi</taxon>
        <taxon>Mammalia</taxon>
        <taxon>Eutheria</taxon>
        <taxon>Euarchontoglires</taxon>
        <taxon>Glires</taxon>
        <taxon>Rodentia</taxon>
        <taxon>Myomorpha</taxon>
        <taxon>Muroidea</taxon>
        <taxon>Muridae</taxon>
        <taxon>Murinae</taxon>
        <taxon>Mus</taxon>
        <taxon>Mus</taxon>
    </lineage>
</organism>
<evidence type="ECO:0000255" key="1"/>
<evidence type="ECO:0000255" key="2">
    <source>
        <dbReference type="PROSITE-ProRule" id="PRU00286"/>
    </source>
</evidence>
<evidence type="ECO:0000305" key="3"/>